<keyword id="KW-0067">ATP-binding</keyword>
<keyword id="KW-0347">Helicase</keyword>
<keyword id="KW-0378">Hydrolase</keyword>
<keyword id="KW-0413">Isomerase</keyword>
<keyword id="KW-0547">Nucleotide-binding</keyword>
<keyword id="KW-1185">Reference proteome</keyword>
<keyword id="KW-0677">Repeat</keyword>
<name>YMN3_YEAST</name>
<feature type="chain" id="PRO_0000102209" description="Y' element ATP-dependent helicase YML133C">
    <location>
        <begin position="1"/>
        <end position="1374"/>
    </location>
</feature>
<feature type="domain" description="Helicase ATP-binding" evidence="1">
    <location>
        <begin position="375"/>
        <end position="552"/>
    </location>
</feature>
<feature type="domain" description="Helicase C-terminal" evidence="2">
    <location>
        <begin position="609"/>
        <end position="758"/>
    </location>
</feature>
<feature type="region of interest" description="Disordered" evidence="3">
    <location>
        <begin position="832"/>
        <end position="999"/>
    </location>
</feature>
<feature type="compositionally biased region" description="Low complexity" evidence="3">
    <location>
        <begin position="832"/>
        <end position="975"/>
    </location>
</feature>
<feature type="compositionally biased region" description="Basic and acidic residues" evidence="3">
    <location>
        <begin position="976"/>
        <end position="999"/>
    </location>
</feature>
<feature type="binding site" evidence="1">
    <location>
        <begin position="388"/>
        <end position="395"/>
    </location>
    <ligand>
        <name>ATP</name>
        <dbReference type="ChEBI" id="CHEBI:30616"/>
    </ligand>
</feature>
<sequence>MKVSDRRKFEKANFDEFESALNNKNDLVHCPSITLFESIPTEVRSFYEDEKSGLIKVVKFRTGAMDRKRSFEKIVVSVMVGKNVQKFLTFVEDEPDFQGGPIPSKYLIPKKINLMVYTLFQVHTLKFNRKDYDTLSLFYLNRGYYNELSFRVLERCHEIASARPNDSSTMRTFTDFVSGAPIVRSLQKSTIRRYGYNLAPHMFLLLHVDELSIFSAYQASLPGEKKVDTERLKRDLCPRKPIEIKYFSQICNDMMNKKDRLGDVLATAQRIRRRYNKNSSSEPRLKTLDGLTSERWIQWLGLESDYHCSFSSTRNAEDVVAGEAASSDHHQKISRVTRKRPREPKSTNDILVAGQKLFGSSFEFRDLHQLRLCHEIYMADTPSVAVQAPPGYGKTELFHLPLIALASKGDVKYVSFLFVPYTVLLANCMIRLSRCGCLNVAPVRNFIEEGCDGVTDLYVGIYDDLASTNFTDRIAAWENIVECTFRTNNVKLGYLIVDEFHNFETEVYRQSQFGGITNLDFDAFEKAIFLSGTAPEAVADAALQRIGLTGLAKKSMDINELKRSEDLSRGLSSYPTRMFNLIKEKSEVPLGHVHKIWKKVESQPEEALKLLLALFEIEPESKAIVVASTTNEVEELACSWRKYFRVVWIHGKLGAAEKVSRTKEFVTDGSMRVLIGTKLVTEGIDIKQLMMVIMLDNRLNIIELIQGVGRLRDGGLCYLLSRKNSWAARNRKGELPPIKEGCITEQVREFYGLESKKGKKGQHVGCCGSRTDLSADTVELIERMDRLAEKQATASMSIVALPSSFQESNSSDRCRKYCSSDEDSDTCIHGSANASTNATTNSSTNATTTASTNVRTSATTTASINVRTSATTTESTNSSTNATTTASTNVRTSATTTASINVRTSATTTESTNSNTSATTTESTDSNTSATTTESTDSNTSATTTASTNSSTNATTTASTNSSTNATTTESTNASAKEDANKDGNAEDNRFHPVTDINKESYKRKGSQMVLLERKKLKAQFPNTSENMNVLQFLGFRSDEIKHLFLYGIDIYFCPEGVFTQYGLCKGCQKMFELCVCWAGQKVSYRRMAWEALAVERMLRNDEEYKEYLEDIEPYHGDPVGYLKFFSVKRGEIYSQIQRNYAWYLAITRRRETISVLDSTRGKQGSQVFRMSGRQIKELYYKVWSNLRESKTEVLQYFLNWDEKKCREEWEAKDDTVFVEALEKVGVFQRLRSMTSAGLQGPQYVKLQFSRHHRQLRSRYELSLGMHLRDQLALGVTPSKVPHWTAFLSMLIGLFYNKTFRQKLEYLLEQISEVWLLPHWVDLANVEVLAADNTRVPLYMLMVAVHKELDSDDVPDGRFDIILLCRDSSREVGE</sequence>
<dbReference type="EC" id="5.6.2.-" evidence="5"/>
<dbReference type="EMBL" id="Z50178">
    <property type="protein sequence ID" value="CAA90549.1"/>
    <property type="status" value="ALT_SEQ"/>
    <property type="molecule type" value="Genomic_DNA"/>
</dbReference>
<dbReference type="EMBL" id="Z50178">
    <property type="protein sequence ID" value="CAA90550.1"/>
    <property type="status" value="ALT_SEQ"/>
    <property type="molecule type" value="Genomic_DNA"/>
</dbReference>
<dbReference type="EMBL" id="BK006946">
    <property type="protein sequence ID" value="DAA09766.1"/>
    <property type="molecule type" value="Genomic_DNA"/>
</dbReference>
<dbReference type="PIR" id="S69875">
    <property type="entry name" value="S69875"/>
</dbReference>
<dbReference type="RefSeq" id="NP_013573.1">
    <property type="nucleotide sequence ID" value="NM_001182496.1"/>
</dbReference>
<dbReference type="SMR" id="Q03099"/>
<dbReference type="BioGRID" id="35072">
    <property type="interactions" value="25"/>
</dbReference>
<dbReference type="DIP" id="DIP-7582N"/>
<dbReference type="FunCoup" id="Q03099">
    <property type="interactions" value="58"/>
</dbReference>
<dbReference type="STRING" id="4932.YML133C"/>
<dbReference type="PaxDb" id="4932-YML133C"/>
<dbReference type="PeptideAtlas" id="Q03099"/>
<dbReference type="EnsemblFungi" id="YML133C_mRNA">
    <property type="protein sequence ID" value="YML133C"/>
    <property type="gene ID" value="YML133C"/>
</dbReference>
<dbReference type="GeneID" id="854906"/>
<dbReference type="KEGG" id="sce:YML133C"/>
<dbReference type="AGR" id="SGD:S000004602"/>
<dbReference type="SGD" id="S000004602">
    <property type="gene designation" value="YML133C"/>
</dbReference>
<dbReference type="VEuPathDB" id="FungiDB:YML133C"/>
<dbReference type="eggNOG" id="ENOG502QWCT">
    <property type="taxonomic scope" value="Eukaryota"/>
</dbReference>
<dbReference type="GeneTree" id="ENSGT00940000153173"/>
<dbReference type="HOGENOM" id="CLU_003044_2_0_1"/>
<dbReference type="InParanoid" id="Q03099"/>
<dbReference type="OMA" id="SATTTXS"/>
<dbReference type="BioCyc" id="YEAST:G3O-32711-MONOMER"/>
<dbReference type="Reactome" id="R-SCE-5689880">
    <property type="pathway name" value="Ub-specific processing proteases"/>
</dbReference>
<dbReference type="PRO" id="PR:Q03099"/>
<dbReference type="Proteomes" id="UP000002311">
    <property type="component" value="Chromosome XIII"/>
</dbReference>
<dbReference type="RNAct" id="Q03099">
    <property type="molecule type" value="protein"/>
</dbReference>
<dbReference type="GO" id="GO:0005737">
    <property type="term" value="C:cytoplasm"/>
    <property type="evidence" value="ECO:0000318"/>
    <property type="project" value="GO_Central"/>
</dbReference>
<dbReference type="GO" id="GO:0005739">
    <property type="term" value="C:mitochondrion"/>
    <property type="evidence" value="ECO:0007005"/>
    <property type="project" value="SGD"/>
</dbReference>
<dbReference type="GO" id="GO:0005524">
    <property type="term" value="F:ATP binding"/>
    <property type="evidence" value="ECO:0007669"/>
    <property type="project" value="UniProtKB-KW"/>
</dbReference>
<dbReference type="GO" id="GO:0016887">
    <property type="term" value="F:ATP hydrolysis activity"/>
    <property type="evidence" value="ECO:0007669"/>
    <property type="project" value="RHEA"/>
</dbReference>
<dbReference type="GO" id="GO:0004386">
    <property type="term" value="F:helicase activity"/>
    <property type="evidence" value="ECO:0000250"/>
    <property type="project" value="SGD"/>
</dbReference>
<dbReference type="GO" id="GO:0003676">
    <property type="term" value="F:nucleic acid binding"/>
    <property type="evidence" value="ECO:0007669"/>
    <property type="project" value="InterPro"/>
</dbReference>
<dbReference type="GO" id="GO:0000722">
    <property type="term" value="P:telomere maintenance via recombination"/>
    <property type="evidence" value="ECO:0007669"/>
    <property type="project" value="UniProtKB-ARBA"/>
</dbReference>
<dbReference type="FunFam" id="3.40.50.300:FF:001914">
    <property type="entry name" value="YML133C-like protein"/>
    <property type="match status" value="1"/>
</dbReference>
<dbReference type="FunFam" id="3.40.50.300:FF:002410">
    <property type="entry name" value="YML133C-like protein"/>
    <property type="match status" value="1"/>
</dbReference>
<dbReference type="Gene3D" id="3.40.50.300">
    <property type="entry name" value="P-loop containing nucleotide triphosphate hydrolases"/>
    <property type="match status" value="1"/>
</dbReference>
<dbReference type="InterPro" id="IPR011545">
    <property type="entry name" value="DEAD/DEAH_box_helicase_dom"/>
</dbReference>
<dbReference type="InterPro" id="IPR014001">
    <property type="entry name" value="Helicase_ATP-bd"/>
</dbReference>
<dbReference type="InterPro" id="IPR001650">
    <property type="entry name" value="Helicase_C-like"/>
</dbReference>
<dbReference type="InterPro" id="IPR027417">
    <property type="entry name" value="P-loop_NTPase"/>
</dbReference>
<dbReference type="InterPro" id="IPR021646">
    <property type="entry name" value="Sir1_ORC-binding"/>
</dbReference>
<dbReference type="InterPro" id="IPR050978">
    <property type="entry name" value="Y'_ATP-dependent_helicase"/>
</dbReference>
<dbReference type="PANTHER" id="PTHR31583">
    <property type="match status" value="1"/>
</dbReference>
<dbReference type="PANTHER" id="PTHR31583:SF2">
    <property type="match status" value="1"/>
</dbReference>
<dbReference type="Pfam" id="PF00270">
    <property type="entry name" value="DEAD"/>
    <property type="match status" value="1"/>
</dbReference>
<dbReference type="Pfam" id="PF00271">
    <property type="entry name" value="Helicase_C"/>
    <property type="match status" value="1"/>
</dbReference>
<dbReference type="Pfam" id="PF11603">
    <property type="entry name" value="Sir1"/>
    <property type="match status" value="1"/>
</dbReference>
<dbReference type="SMART" id="SM00487">
    <property type="entry name" value="DEXDc"/>
    <property type="match status" value="1"/>
</dbReference>
<dbReference type="SMART" id="SM00490">
    <property type="entry name" value="HELICc"/>
    <property type="match status" value="1"/>
</dbReference>
<dbReference type="SUPFAM" id="SSF52540">
    <property type="entry name" value="P-loop containing nucleoside triphosphate hydrolases"/>
    <property type="match status" value="1"/>
</dbReference>
<dbReference type="PROSITE" id="PS51192">
    <property type="entry name" value="HELICASE_ATP_BIND_1"/>
    <property type="match status" value="1"/>
</dbReference>
<dbReference type="PROSITE" id="PS51194">
    <property type="entry name" value="HELICASE_CTER"/>
    <property type="match status" value="1"/>
</dbReference>
<organism>
    <name type="scientific">Saccharomyces cerevisiae (strain ATCC 204508 / S288c)</name>
    <name type="common">Baker's yeast</name>
    <dbReference type="NCBI Taxonomy" id="559292"/>
    <lineage>
        <taxon>Eukaryota</taxon>
        <taxon>Fungi</taxon>
        <taxon>Dikarya</taxon>
        <taxon>Ascomycota</taxon>
        <taxon>Saccharomycotina</taxon>
        <taxon>Saccharomycetes</taxon>
        <taxon>Saccharomycetales</taxon>
        <taxon>Saccharomycetaceae</taxon>
        <taxon>Saccharomyces</taxon>
    </lineage>
</organism>
<accession>Q03099</accession>
<accession>D6W0F2</accession>
<accession>Q12054</accession>
<protein>
    <recommendedName>
        <fullName>Y' element ATP-dependent helicase YML133C</fullName>
        <ecNumber evidence="5">5.6.2.-</ecNumber>
    </recommendedName>
</protein>
<evidence type="ECO:0000255" key="1">
    <source>
        <dbReference type="PROSITE-ProRule" id="PRU00541"/>
    </source>
</evidence>
<evidence type="ECO:0000255" key="2">
    <source>
        <dbReference type="PROSITE-ProRule" id="PRU00542"/>
    </source>
</evidence>
<evidence type="ECO:0000256" key="3">
    <source>
        <dbReference type="SAM" id="MobiDB-lite"/>
    </source>
</evidence>
<evidence type="ECO:0000305" key="4"/>
<evidence type="ECO:0000305" key="5">
    <source>
    </source>
</evidence>
<comment type="function">
    <text evidence="5">Catalyzes DNA unwinding and is involved in telomerase-independent telomere maintenance.</text>
</comment>
<comment type="induction">
    <text evidence="5">Induced in absence of telomerase TLC1.</text>
</comment>
<comment type="similarity">
    <text evidence="4">Belongs to the helicase family. Yeast subtelomeric Y' repeat subfamily.</text>
</comment>
<comment type="sequence caution" evidence="4">
    <conflict type="erroneous gene model prediction">
        <sequence resource="EMBL-CDS" id="CAA90549"/>
    </conflict>
</comment>
<comment type="sequence caution" evidence="4">
    <conflict type="erroneous gene model prediction">
        <sequence resource="EMBL-CDS" id="CAA90550"/>
    </conflict>
</comment>
<proteinExistence type="evidence at transcript level"/>
<reference key="1">
    <citation type="journal article" date="1997" name="Nature">
        <title>The nucleotide sequence of Saccharomyces cerevisiae chromosome XIII.</title>
        <authorList>
            <person name="Bowman S."/>
            <person name="Churcher C.M."/>
            <person name="Badcock K."/>
            <person name="Brown D."/>
            <person name="Chillingworth T."/>
            <person name="Connor R."/>
            <person name="Dedman K."/>
            <person name="Devlin K."/>
            <person name="Gentles S."/>
            <person name="Hamlin N."/>
            <person name="Hunt S."/>
            <person name="Jagels K."/>
            <person name="Lye G."/>
            <person name="Moule S."/>
            <person name="Odell C."/>
            <person name="Pearson D."/>
            <person name="Rajandream M.A."/>
            <person name="Rice P."/>
            <person name="Skelton J."/>
            <person name="Walsh S.V."/>
            <person name="Whitehead S."/>
            <person name="Barrell B.G."/>
        </authorList>
    </citation>
    <scope>NUCLEOTIDE SEQUENCE [LARGE SCALE GENOMIC DNA]</scope>
    <source>
        <strain>ATCC 204508 / S288c</strain>
    </source>
</reference>
<reference key="2">
    <citation type="journal article" date="2014" name="G3 (Bethesda)">
        <title>The reference genome sequence of Saccharomyces cerevisiae: Then and now.</title>
        <authorList>
            <person name="Engel S.R."/>
            <person name="Dietrich F.S."/>
            <person name="Fisk D.G."/>
            <person name="Binkley G."/>
            <person name="Balakrishnan R."/>
            <person name="Costanzo M.C."/>
            <person name="Dwight S.S."/>
            <person name="Hitz B.C."/>
            <person name="Karra K."/>
            <person name="Nash R.S."/>
            <person name="Weng S."/>
            <person name="Wong E.D."/>
            <person name="Lloyd P."/>
            <person name="Skrzypek M.S."/>
            <person name="Miyasato S.R."/>
            <person name="Simison M."/>
            <person name="Cherry J.M."/>
        </authorList>
    </citation>
    <scope>GENOME REANNOTATION</scope>
    <source>
        <strain>ATCC 204508 / S288c</strain>
    </source>
</reference>
<reference key="3">
    <citation type="journal article" date="1998" name="J. Biol. Chem.">
        <title>Y'-Help1, a DNA helicase encoded by the yeast subtelomeric Y' element, is induced in survivors defective for telomerase.</title>
        <authorList>
            <person name="Yamada M."/>
            <person name="Hayatsu N."/>
            <person name="Matsuura A."/>
            <person name="Ishikawa F."/>
        </authorList>
    </citation>
    <scope>FUNCTION</scope>
    <scope>INDUCTION</scope>
</reference>
<gene>
    <name type="ordered locus">YML133C</name>
    <name type="ORF">YM4987.01C</name>
    <name type="ORF">YM4987.02C</name>
</gene>